<accession>B8F871</accession>
<proteinExistence type="inferred from homology"/>
<gene>
    <name evidence="1" type="primary">obg</name>
    <name type="ordered locus">HAPS_2066</name>
</gene>
<name>OBG_GLAP5</name>
<evidence type="ECO:0000255" key="1">
    <source>
        <dbReference type="HAMAP-Rule" id="MF_01454"/>
    </source>
</evidence>
<evidence type="ECO:0000255" key="2">
    <source>
        <dbReference type="PROSITE-ProRule" id="PRU01231"/>
    </source>
</evidence>
<evidence type="ECO:0000256" key="3">
    <source>
        <dbReference type="SAM" id="MobiDB-lite"/>
    </source>
</evidence>
<organism>
    <name type="scientific">Glaesserella parasuis serovar 5 (strain SH0165)</name>
    <name type="common">Haemophilus parasuis</name>
    <dbReference type="NCBI Taxonomy" id="557723"/>
    <lineage>
        <taxon>Bacteria</taxon>
        <taxon>Pseudomonadati</taxon>
        <taxon>Pseudomonadota</taxon>
        <taxon>Gammaproteobacteria</taxon>
        <taxon>Pasteurellales</taxon>
        <taxon>Pasteurellaceae</taxon>
        <taxon>Glaesserella</taxon>
    </lineage>
</organism>
<sequence>MKFIDEALIRVEAGDGGNGCVSFRREKFIPKGGPDGGDGGDGGDVYLIADENLNTLIDYRFEKRFAAGRGENGRSAGCTGHRGSDITLRVPVGTRAIDNDTQEVIGDLTKHGMKMLVAKGGYHGLGNTRFKSSVNRAPRQKTNGTPGEKRDLQLELMLLADVGMLGLPNAGKSTFIRAVSAAKPKVADYPFTTLVPSLGVARVGADRSFVVADIPGLIEGAAEGAGLGIRFLKHLERCRVLIHLVDIMPIDESDPAQNISIIESELYQYSEKLADKPQWLVFNKIDTIGEEEARERAEAIVEEIGWEGDYYLISAATGQNVSALTRDIMDFIEANPRVEEEEKAKEEVAFKWDDYHQQAMQNPITEDDWDDLDDDGWTEEDDEGVEFIYKP</sequence>
<feature type="chain" id="PRO_0000385965" description="GTPase Obg">
    <location>
        <begin position="1"/>
        <end position="391"/>
    </location>
</feature>
<feature type="domain" description="Obg" evidence="2">
    <location>
        <begin position="1"/>
        <end position="159"/>
    </location>
</feature>
<feature type="domain" description="OBG-type G" evidence="1">
    <location>
        <begin position="160"/>
        <end position="333"/>
    </location>
</feature>
<feature type="region of interest" description="Disordered" evidence="3">
    <location>
        <begin position="361"/>
        <end position="391"/>
    </location>
</feature>
<feature type="compositionally biased region" description="Acidic residues" evidence="3">
    <location>
        <begin position="365"/>
        <end position="385"/>
    </location>
</feature>
<feature type="binding site" evidence="1">
    <location>
        <begin position="166"/>
        <end position="173"/>
    </location>
    <ligand>
        <name>GTP</name>
        <dbReference type="ChEBI" id="CHEBI:37565"/>
    </ligand>
</feature>
<feature type="binding site" evidence="1">
    <location>
        <position position="173"/>
    </location>
    <ligand>
        <name>Mg(2+)</name>
        <dbReference type="ChEBI" id="CHEBI:18420"/>
    </ligand>
</feature>
<feature type="binding site" evidence="1">
    <location>
        <begin position="191"/>
        <end position="195"/>
    </location>
    <ligand>
        <name>GTP</name>
        <dbReference type="ChEBI" id="CHEBI:37565"/>
    </ligand>
</feature>
<feature type="binding site" evidence="1">
    <location>
        <position position="193"/>
    </location>
    <ligand>
        <name>Mg(2+)</name>
        <dbReference type="ChEBI" id="CHEBI:18420"/>
    </ligand>
</feature>
<feature type="binding site" evidence="1">
    <location>
        <begin position="213"/>
        <end position="216"/>
    </location>
    <ligand>
        <name>GTP</name>
        <dbReference type="ChEBI" id="CHEBI:37565"/>
    </ligand>
</feature>
<feature type="binding site" evidence="1">
    <location>
        <begin position="283"/>
        <end position="286"/>
    </location>
    <ligand>
        <name>GTP</name>
        <dbReference type="ChEBI" id="CHEBI:37565"/>
    </ligand>
</feature>
<feature type="binding site" evidence="1">
    <location>
        <begin position="314"/>
        <end position="316"/>
    </location>
    <ligand>
        <name>GTP</name>
        <dbReference type="ChEBI" id="CHEBI:37565"/>
    </ligand>
</feature>
<comment type="function">
    <text evidence="1">An essential GTPase which binds GTP, GDP and possibly (p)ppGpp with moderate affinity, with high nucleotide exchange rates and a fairly low GTP hydrolysis rate. Plays a role in control of the cell cycle, stress response, ribosome biogenesis and in those bacteria that undergo differentiation, in morphogenesis control.</text>
</comment>
<comment type="cofactor">
    <cofactor evidence="1">
        <name>Mg(2+)</name>
        <dbReference type="ChEBI" id="CHEBI:18420"/>
    </cofactor>
</comment>
<comment type="subunit">
    <text evidence="1">Monomer.</text>
</comment>
<comment type="subcellular location">
    <subcellularLocation>
        <location evidence="1">Cytoplasm</location>
    </subcellularLocation>
</comment>
<comment type="similarity">
    <text evidence="1">Belongs to the TRAFAC class OBG-HflX-like GTPase superfamily. OBG GTPase family.</text>
</comment>
<keyword id="KW-0963">Cytoplasm</keyword>
<keyword id="KW-0342">GTP-binding</keyword>
<keyword id="KW-0378">Hydrolase</keyword>
<keyword id="KW-0460">Magnesium</keyword>
<keyword id="KW-0479">Metal-binding</keyword>
<keyword id="KW-0547">Nucleotide-binding</keyword>
<keyword id="KW-1185">Reference proteome</keyword>
<dbReference type="EC" id="3.6.5.-" evidence="1"/>
<dbReference type="EMBL" id="CP001321">
    <property type="protein sequence ID" value="ACL33523.1"/>
    <property type="molecule type" value="Genomic_DNA"/>
</dbReference>
<dbReference type="SMR" id="B8F871"/>
<dbReference type="STRING" id="557723.HAPS_2066"/>
<dbReference type="KEGG" id="hap:HAPS_2066"/>
<dbReference type="HOGENOM" id="CLU_011747_2_0_6"/>
<dbReference type="Proteomes" id="UP000006743">
    <property type="component" value="Chromosome"/>
</dbReference>
<dbReference type="GO" id="GO:0005737">
    <property type="term" value="C:cytoplasm"/>
    <property type="evidence" value="ECO:0007669"/>
    <property type="project" value="UniProtKB-SubCell"/>
</dbReference>
<dbReference type="GO" id="GO:0005525">
    <property type="term" value="F:GTP binding"/>
    <property type="evidence" value="ECO:0007669"/>
    <property type="project" value="UniProtKB-UniRule"/>
</dbReference>
<dbReference type="GO" id="GO:0003924">
    <property type="term" value="F:GTPase activity"/>
    <property type="evidence" value="ECO:0007669"/>
    <property type="project" value="UniProtKB-UniRule"/>
</dbReference>
<dbReference type="GO" id="GO:0000287">
    <property type="term" value="F:magnesium ion binding"/>
    <property type="evidence" value="ECO:0007669"/>
    <property type="project" value="InterPro"/>
</dbReference>
<dbReference type="GO" id="GO:0042254">
    <property type="term" value="P:ribosome biogenesis"/>
    <property type="evidence" value="ECO:0007669"/>
    <property type="project" value="UniProtKB-UniRule"/>
</dbReference>
<dbReference type="CDD" id="cd01898">
    <property type="entry name" value="Obg"/>
    <property type="match status" value="1"/>
</dbReference>
<dbReference type="FunFam" id="2.70.210.12:FF:000001">
    <property type="entry name" value="GTPase Obg"/>
    <property type="match status" value="1"/>
</dbReference>
<dbReference type="Gene3D" id="2.70.210.12">
    <property type="entry name" value="GTP1/OBG domain"/>
    <property type="match status" value="1"/>
</dbReference>
<dbReference type="Gene3D" id="3.40.50.300">
    <property type="entry name" value="P-loop containing nucleotide triphosphate hydrolases"/>
    <property type="match status" value="1"/>
</dbReference>
<dbReference type="HAMAP" id="MF_01454">
    <property type="entry name" value="GTPase_Obg"/>
    <property type="match status" value="1"/>
</dbReference>
<dbReference type="InterPro" id="IPR031167">
    <property type="entry name" value="G_OBG"/>
</dbReference>
<dbReference type="InterPro" id="IPR006073">
    <property type="entry name" value="GTP-bd"/>
</dbReference>
<dbReference type="InterPro" id="IPR014100">
    <property type="entry name" value="GTP-bd_Obg/CgtA"/>
</dbReference>
<dbReference type="InterPro" id="IPR006074">
    <property type="entry name" value="GTP1-OBG_CS"/>
</dbReference>
<dbReference type="InterPro" id="IPR006169">
    <property type="entry name" value="GTP1_OBG_dom"/>
</dbReference>
<dbReference type="InterPro" id="IPR036726">
    <property type="entry name" value="GTP1_OBG_dom_sf"/>
</dbReference>
<dbReference type="InterPro" id="IPR045086">
    <property type="entry name" value="OBG_GTPase"/>
</dbReference>
<dbReference type="InterPro" id="IPR027417">
    <property type="entry name" value="P-loop_NTPase"/>
</dbReference>
<dbReference type="NCBIfam" id="TIGR02729">
    <property type="entry name" value="Obg_CgtA"/>
    <property type="match status" value="1"/>
</dbReference>
<dbReference type="NCBIfam" id="NF008955">
    <property type="entry name" value="PRK12297.1"/>
    <property type="match status" value="1"/>
</dbReference>
<dbReference type="NCBIfam" id="NF008956">
    <property type="entry name" value="PRK12299.1"/>
    <property type="match status" value="1"/>
</dbReference>
<dbReference type="PANTHER" id="PTHR11702">
    <property type="entry name" value="DEVELOPMENTALLY REGULATED GTP-BINDING PROTEIN-RELATED"/>
    <property type="match status" value="1"/>
</dbReference>
<dbReference type="PANTHER" id="PTHR11702:SF31">
    <property type="entry name" value="MITOCHONDRIAL RIBOSOME-ASSOCIATED GTPASE 2"/>
    <property type="match status" value="1"/>
</dbReference>
<dbReference type="Pfam" id="PF01018">
    <property type="entry name" value="GTP1_OBG"/>
    <property type="match status" value="1"/>
</dbReference>
<dbReference type="Pfam" id="PF01926">
    <property type="entry name" value="MMR_HSR1"/>
    <property type="match status" value="1"/>
</dbReference>
<dbReference type="PIRSF" id="PIRSF002401">
    <property type="entry name" value="GTP_bd_Obg/CgtA"/>
    <property type="match status" value="1"/>
</dbReference>
<dbReference type="PRINTS" id="PR00326">
    <property type="entry name" value="GTP1OBG"/>
</dbReference>
<dbReference type="SUPFAM" id="SSF82051">
    <property type="entry name" value="Obg GTP-binding protein N-terminal domain"/>
    <property type="match status" value="1"/>
</dbReference>
<dbReference type="SUPFAM" id="SSF52540">
    <property type="entry name" value="P-loop containing nucleoside triphosphate hydrolases"/>
    <property type="match status" value="1"/>
</dbReference>
<dbReference type="PROSITE" id="PS51710">
    <property type="entry name" value="G_OBG"/>
    <property type="match status" value="1"/>
</dbReference>
<dbReference type="PROSITE" id="PS00905">
    <property type="entry name" value="GTP1_OBG"/>
    <property type="match status" value="1"/>
</dbReference>
<dbReference type="PROSITE" id="PS51883">
    <property type="entry name" value="OBG"/>
    <property type="match status" value="1"/>
</dbReference>
<protein>
    <recommendedName>
        <fullName evidence="1">GTPase Obg</fullName>
        <ecNumber evidence="1">3.6.5.-</ecNumber>
    </recommendedName>
    <alternativeName>
        <fullName evidence="1">GTP-binding protein Obg</fullName>
    </alternativeName>
</protein>
<reference key="1">
    <citation type="journal article" date="2009" name="J. Bacteriol.">
        <title>Complete genome sequence of Haemophilus parasuis SH0165.</title>
        <authorList>
            <person name="Yue M."/>
            <person name="Yang F."/>
            <person name="Yang J."/>
            <person name="Bei W."/>
            <person name="Cai X."/>
            <person name="Chen L."/>
            <person name="Dong J."/>
            <person name="Zhou R."/>
            <person name="Jin M."/>
            <person name="Jin Q."/>
            <person name="Chen H."/>
        </authorList>
    </citation>
    <scope>NUCLEOTIDE SEQUENCE [LARGE SCALE GENOMIC DNA]</scope>
    <source>
        <strain>SH0165</strain>
    </source>
</reference>